<proteinExistence type="inferred from homology"/>
<feature type="chain" id="PRO_1000186017" description="3-ketoacyl-CoA thiolase">
    <location>
        <begin position="1"/>
        <end position="390"/>
    </location>
</feature>
<feature type="active site" description="Acyl-thioester intermediate" evidence="1">
    <location>
        <position position="95"/>
    </location>
</feature>
<feature type="active site" description="Proton acceptor" evidence="1">
    <location>
        <position position="346"/>
    </location>
</feature>
<feature type="active site" description="Proton acceptor" evidence="1">
    <location>
        <position position="376"/>
    </location>
</feature>
<keyword id="KW-0012">Acyltransferase</keyword>
<keyword id="KW-0963">Cytoplasm</keyword>
<keyword id="KW-0276">Fatty acid metabolism</keyword>
<keyword id="KW-0442">Lipid degradation</keyword>
<keyword id="KW-0443">Lipid metabolism</keyword>
<keyword id="KW-0808">Transferase</keyword>
<comment type="function">
    <text evidence="1">Catalyzes the final step of fatty acid oxidation in which acetyl-CoA is released and the CoA ester of a fatty acid two carbons shorter is formed.</text>
</comment>
<comment type="catalytic activity">
    <reaction evidence="1">
        <text>an acyl-CoA + acetyl-CoA = a 3-oxoacyl-CoA + CoA</text>
        <dbReference type="Rhea" id="RHEA:21564"/>
        <dbReference type="ChEBI" id="CHEBI:57287"/>
        <dbReference type="ChEBI" id="CHEBI:57288"/>
        <dbReference type="ChEBI" id="CHEBI:58342"/>
        <dbReference type="ChEBI" id="CHEBI:90726"/>
        <dbReference type="EC" id="2.3.1.16"/>
    </reaction>
</comment>
<comment type="pathway">
    <text evidence="1">Lipid metabolism; fatty acid beta-oxidation.</text>
</comment>
<comment type="subunit">
    <text evidence="1">Heterotetramer of two alpha chains (FadB) and two beta chains (FadA).</text>
</comment>
<comment type="subcellular location">
    <subcellularLocation>
        <location evidence="1">Cytoplasm</location>
    </subcellularLocation>
</comment>
<comment type="similarity">
    <text evidence="1">Belongs to the thiolase-like superfamily. Thiolase family.</text>
</comment>
<gene>
    <name evidence="1" type="primary">fadA</name>
    <name type="ordered locus">ABBFA_003231</name>
</gene>
<protein>
    <recommendedName>
        <fullName evidence="1">3-ketoacyl-CoA thiolase</fullName>
        <ecNumber evidence="1">2.3.1.16</ecNumber>
    </recommendedName>
    <alternativeName>
        <fullName evidence="1">Acetyl-CoA acyltransferase</fullName>
    </alternativeName>
    <alternativeName>
        <fullName evidence="1">Beta-ketothiolase</fullName>
    </alternativeName>
    <alternativeName>
        <fullName evidence="1">Fatty acid oxidation complex subunit beta</fullName>
    </alternativeName>
</protein>
<name>FADA_ACIB3</name>
<reference key="1">
    <citation type="journal article" date="2008" name="J. Bacteriol.">
        <title>Comparative genome sequence analysis of multidrug-resistant Acinetobacter baumannii.</title>
        <authorList>
            <person name="Adams M.D."/>
            <person name="Goglin K."/>
            <person name="Molyneaux N."/>
            <person name="Hujer K.M."/>
            <person name="Lavender H."/>
            <person name="Jamison J.J."/>
            <person name="MacDonald I.J."/>
            <person name="Martin K.M."/>
            <person name="Russo T."/>
            <person name="Campagnari A.A."/>
            <person name="Hujer A.M."/>
            <person name="Bonomo R.A."/>
            <person name="Gill S.R."/>
        </authorList>
    </citation>
    <scope>NUCLEOTIDE SEQUENCE [LARGE SCALE GENOMIC DNA]</scope>
    <source>
        <strain>AB307-0294</strain>
    </source>
</reference>
<organism>
    <name type="scientific">Acinetobacter baumannii (strain AB307-0294)</name>
    <dbReference type="NCBI Taxonomy" id="557600"/>
    <lineage>
        <taxon>Bacteria</taxon>
        <taxon>Pseudomonadati</taxon>
        <taxon>Pseudomonadota</taxon>
        <taxon>Gammaproteobacteria</taxon>
        <taxon>Moraxellales</taxon>
        <taxon>Moraxellaceae</taxon>
        <taxon>Acinetobacter</taxon>
        <taxon>Acinetobacter calcoaceticus/baumannii complex</taxon>
    </lineage>
</organism>
<dbReference type="EC" id="2.3.1.16" evidence="1"/>
<dbReference type="EMBL" id="CP001172">
    <property type="protein sequence ID" value="ACJ56815.1"/>
    <property type="molecule type" value="Genomic_DNA"/>
</dbReference>
<dbReference type="RefSeq" id="WP_000212712.1">
    <property type="nucleotide sequence ID" value="NZ_CP001172.1"/>
</dbReference>
<dbReference type="SMR" id="B7H1I1"/>
<dbReference type="GeneID" id="92892301"/>
<dbReference type="HOGENOM" id="CLU_031026_2_2_6"/>
<dbReference type="UniPathway" id="UPA00659"/>
<dbReference type="Proteomes" id="UP000006924">
    <property type="component" value="Chromosome"/>
</dbReference>
<dbReference type="GO" id="GO:0005737">
    <property type="term" value="C:cytoplasm"/>
    <property type="evidence" value="ECO:0007669"/>
    <property type="project" value="UniProtKB-SubCell"/>
</dbReference>
<dbReference type="GO" id="GO:0003988">
    <property type="term" value="F:acetyl-CoA C-acyltransferase activity"/>
    <property type="evidence" value="ECO:0007669"/>
    <property type="project" value="UniProtKB-UniRule"/>
</dbReference>
<dbReference type="GO" id="GO:0006635">
    <property type="term" value="P:fatty acid beta-oxidation"/>
    <property type="evidence" value="ECO:0007669"/>
    <property type="project" value="UniProtKB-UniRule"/>
</dbReference>
<dbReference type="GO" id="GO:0010124">
    <property type="term" value="P:phenylacetate catabolic process"/>
    <property type="evidence" value="ECO:0007669"/>
    <property type="project" value="TreeGrafter"/>
</dbReference>
<dbReference type="CDD" id="cd00751">
    <property type="entry name" value="thiolase"/>
    <property type="match status" value="1"/>
</dbReference>
<dbReference type="FunFam" id="3.40.47.10:FF:000010">
    <property type="entry name" value="Acetyl-CoA acetyltransferase (Thiolase)"/>
    <property type="match status" value="1"/>
</dbReference>
<dbReference type="Gene3D" id="3.40.47.10">
    <property type="match status" value="2"/>
</dbReference>
<dbReference type="HAMAP" id="MF_01620">
    <property type="entry name" value="FadA"/>
    <property type="match status" value="1"/>
</dbReference>
<dbReference type="InterPro" id="IPR012805">
    <property type="entry name" value="FadA"/>
</dbReference>
<dbReference type="InterPro" id="IPR002155">
    <property type="entry name" value="Thiolase"/>
</dbReference>
<dbReference type="InterPro" id="IPR016039">
    <property type="entry name" value="Thiolase-like"/>
</dbReference>
<dbReference type="InterPro" id="IPR050215">
    <property type="entry name" value="Thiolase-like_sf_Thiolase"/>
</dbReference>
<dbReference type="InterPro" id="IPR020615">
    <property type="entry name" value="Thiolase_acyl_enz_int_AS"/>
</dbReference>
<dbReference type="InterPro" id="IPR020610">
    <property type="entry name" value="Thiolase_AS"/>
</dbReference>
<dbReference type="InterPro" id="IPR020617">
    <property type="entry name" value="Thiolase_C"/>
</dbReference>
<dbReference type="InterPro" id="IPR020613">
    <property type="entry name" value="Thiolase_CS"/>
</dbReference>
<dbReference type="InterPro" id="IPR020616">
    <property type="entry name" value="Thiolase_N"/>
</dbReference>
<dbReference type="NCBIfam" id="TIGR01930">
    <property type="entry name" value="AcCoA-C-Actrans"/>
    <property type="match status" value="1"/>
</dbReference>
<dbReference type="NCBIfam" id="TIGR02445">
    <property type="entry name" value="fadA"/>
    <property type="match status" value="1"/>
</dbReference>
<dbReference type="NCBIfam" id="NF006510">
    <property type="entry name" value="PRK08947.1"/>
    <property type="match status" value="1"/>
</dbReference>
<dbReference type="PANTHER" id="PTHR43853:SF11">
    <property type="entry name" value="3-KETOACYL-COA THIOLASE FADA"/>
    <property type="match status" value="1"/>
</dbReference>
<dbReference type="PANTHER" id="PTHR43853">
    <property type="entry name" value="3-KETOACYL-COA THIOLASE, PEROXISOMAL"/>
    <property type="match status" value="1"/>
</dbReference>
<dbReference type="Pfam" id="PF02803">
    <property type="entry name" value="Thiolase_C"/>
    <property type="match status" value="1"/>
</dbReference>
<dbReference type="Pfam" id="PF00108">
    <property type="entry name" value="Thiolase_N"/>
    <property type="match status" value="1"/>
</dbReference>
<dbReference type="PIRSF" id="PIRSF000429">
    <property type="entry name" value="Ac-CoA_Ac_transf"/>
    <property type="match status" value="1"/>
</dbReference>
<dbReference type="SUPFAM" id="SSF53901">
    <property type="entry name" value="Thiolase-like"/>
    <property type="match status" value="2"/>
</dbReference>
<dbReference type="PROSITE" id="PS00098">
    <property type="entry name" value="THIOLASE_1"/>
    <property type="match status" value="1"/>
</dbReference>
<dbReference type="PROSITE" id="PS00737">
    <property type="entry name" value="THIOLASE_2"/>
    <property type="match status" value="1"/>
</dbReference>
<dbReference type="PROSITE" id="PS00099">
    <property type="entry name" value="THIOLASE_3"/>
    <property type="match status" value="1"/>
</dbReference>
<sequence>MATLNPRDVVIVDGVRSAMGKSKNGMFRNVRADSLSAELVRALVARNQFDVNEVEDLIWGCVNQTLEQGMNIGRNIGLLAGLPKTVAGQTVNRLCGSSMQAIHTAAAQIATNQGDIFIIGGVEHMGHVGMMHGIDLNPEASKHYAKASNMMGLTAEMLGRMNGITREEQDAFGVESHRRAWAATQEGRFKNEIIGVEGHDANGFKILCDIDEVIRPDANLEAFKALKPVFDPKGGSVTAATSSALSDGASAMLLMSAERAQALGLKPRAVIRSMAVAGCDAAIMGYGPVPATQKALKRAGLSIADIQTVELNEAFAAQGLSVLKGLGLYDKQDIVNLNGGAIALGHPLGCSGARITTTLLNVMEQQDTQIGLATMCIGLGQGIATVIERV</sequence>
<accession>B7H1I1</accession>
<evidence type="ECO:0000255" key="1">
    <source>
        <dbReference type="HAMAP-Rule" id="MF_01620"/>
    </source>
</evidence>